<evidence type="ECO:0000255" key="1">
    <source>
        <dbReference type="HAMAP-Rule" id="MF_00071"/>
    </source>
</evidence>
<keyword id="KW-1003">Cell membrane</keyword>
<keyword id="KW-0342">GTP-binding</keyword>
<keyword id="KW-0378">Hydrolase</keyword>
<keyword id="KW-0472">Membrane</keyword>
<keyword id="KW-0547">Nucleotide-binding</keyword>
<keyword id="KW-0648">Protein biosynthesis</keyword>
<keyword id="KW-1185">Reference proteome</keyword>
<reference key="1">
    <citation type="journal article" date="2006" name="Proc. Natl. Acad. Sci. U.S.A.">
        <title>The complete genome sequence of Lactobacillus bulgaricus reveals extensive and ongoing reductive evolution.</title>
        <authorList>
            <person name="van de Guchte M."/>
            <person name="Penaud S."/>
            <person name="Grimaldi C."/>
            <person name="Barbe V."/>
            <person name="Bryson K."/>
            <person name="Nicolas P."/>
            <person name="Robert C."/>
            <person name="Oztas S."/>
            <person name="Mangenot S."/>
            <person name="Couloux A."/>
            <person name="Loux V."/>
            <person name="Dervyn R."/>
            <person name="Bossy R."/>
            <person name="Bolotin A."/>
            <person name="Batto J.-M."/>
            <person name="Walunas T."/>
            <person name="Gibrat J.-F."/>
            <person name="Bessieres P."/>
            <person name="Weissenbach J."/>
            <person name="Ehrlich S.D."/>
            <person name="Maguin E."/>
        </authorList>
    </citation>
    <scope>NUCLEOTIDE SEQUENCE [LARGE SCALE GENOMIC DNA]</scope>
    <source>
        <strain>ATCC 11842 / DSM 20081 / BCRC 10696 / JCM 1002 / NBRC 13953 / NCIMB 11778 / NCTC 12712 / WDCM 00102 / Lb 14</strain>
    </source>
</reference>
<gene>
    <name evidence="1" type="primary">lepA</name>
    <name type="ordered locus">Ldb1311</name>
</gene>
<proteinExistence type="inferred from homology"/>
<sequence>MDLEKLKDYQKHIRNFSIVAHVDHGKSTIADRILELTDTVSKRQLKNQMLDDMPLERQRGITIKMNSVQVKYHANDGEDYIFHLIDTPGHVDFSYEVSRSLAACEGAVLVVDASQGVQAQTLSNTYLALENDLEILPVLNKIDLPSADPDMAKSEIGDMLGLDASDAVEVSGKTGAGIPELLERIVTDISAPTGDLTKPLKALIFDSKYDDYRGVVMSVRIEEGTVKPGDEIMIMNTGKKYEVTEVGVSSPHPVKEDILIAGDVGYITANIKSVRETRVGDTITSAENPTAEALPGYRQIPPMVYSGMYPTDNRDYDDLKEALQKLQLNDASLEFEPETSQALGFGFRCGFLGLLHMDVVQERLEQEFDLDLIMTAPSVDYHAIMPTGEVKLIDNPADLPDAGEYKELQEPYVKAEIMVPNDFVGAVMQLCEGKRGEFQTMDYLDKYRVNVIYEMPLAEIIYDFFDQLKSSTKGYASLDYEIIGYKATNLVKIDILLNKEPIDALSFIAHREEARDRAVQMCSLLKKLIPRQNFQVDIQGAIGSKIISRATIKPYRKDVTWKIHTGDPDRRAKLLEKQKRGKKRMKSVGRVEVPQDAFMAVLRMNDDDINGK</sequence>
<comment type="function">
    <text evidence="1">Required for accurate and efficient protein synthesis under certain stress conditions. May act as a fidelity factor of the translation reaction, by catalyzing a one-codon backward translocation of tRNAs on improperly translocated ribosomes. Back-translocation proceeds from a post-translocation (POST) complex to a pre-translocation (PRE) complex, thus giving elongation factor G a second chance to translocate the tRNAs correctly. Binds to ribosomes in a GTP-dependent manner.</text>
</comment>
<comment type="catalytic activity">
    <reaction evidence="1">
        <text>GTP + H2O = GDP + phosphate + H(+)</text>
        <dbReference type="Rhea" id="RHEA:19669"/>
        <dbReference type="ChEBI" id="CHEBI:15377"/>
        <dbReference type="ChEBI" id="CHEBI:15378"/>
        <dbReference type="ChEBI" id="CHEBI:37565"/>
        <dbReference type="ChEBI" id="CHEBI:43474"/>
        <dbReference type="ChEBI" id="CHEBI:58189"/>
        <dbReference type="EC" id="3.6.5.n1"/>
    </reaction>
</comment>
<comment type="subcellular location">
    <subcellularLocation>
        <location evidence="1">Cell membrane</location>
        <topology evidence="1">Peripheral membrane protein</topology>
        <orientation evidence="1">Cytoplasmic side</orientation>
    </subcellularLocation>
</comment>
<comment type="similarity">
    <text evidence="1">Belongs to the TRAFAC class translation factor GTPase superfamily. Classic translation factor GTPase family. LepA subfamily.</text>
</comment>
<feature type="chain" id="PRO_0000265668" description="Elongation factor 4">
    <location>
        <begin position="1"/>
        <end position="612"/>
    </location>
</feature>
<feature type="domain" description="tr-type G">
    <location>
        <begin position="11"/>
        <end position="193"/>
    </location>
</feature>
<feature type="binding site" evidence="1">
    <location>
        <begin position="23"/>
        <end position="28"/>
    </location>
    <ligand>
        <name>GTP</name>
        <dbReference type="ChEBI" id="CHEBI:37565"/>
    </ligand>
</feature>
<feature type="binding site" evidence="1">
    <location>
        <begin position="140"/>
        <end position="143"/>
    </location>
    <ligand>
        <name>GTP</name>
        <dbReference type="ChEBI" id="CHEBI:37565"/>
    </ligand>
</feature>
<protein>
    <recommendedName>
        <fullName evidence="1">Elongation factor 4</fullName>
        <shortName evidence="1">EF-4</shortName>
        <ecNumber evidence="1">3.6.5.n1</ecNumber>
    </recommendedName>
    <alternativeName>
        <fullName evidence="1">Ribosomal back-translocase LepA</fullName>
    </alternativeName>
</protein>
<dbReference type="EC" id="3.6.5.n1" evidence="1"/>
<dbReference type="EMBL" id="CR954253">
    <property type="protein sequence ID" value="CAI98112.1"/>
    <property type="molecule type" value="Genomic_DNA"/>
</dbReference>
<dbReference type="RefSeq" id="WP_003618625.1">
    <property type="nucleotide sequence ID" value="NZ_JQAV01000005.1"/>
</dbReference>
<dbReference type="SMR" id="Q1G9R4"/>
<dbReference type="STRING" id="390333.Ldb1311"/>
<dbReference type="KEGG" id="ldb:Ldb1311"/>
<dbReference type="PATRIC" id="fig|390333.13.peg.1596"/>
<dbReference type="eggNOG" id="COG0481">
    <property type="taxonomic scope" value="Bacteria"/>
</dbReference>
<dbReference type="HOGENOM" id="CLU_009995_3_3_9"/>
<dbReference type="BioCyc" id="LDEL390333:LDB_RS05605-MONOMER"/>
<dbReference type="Proteomes" id="UP000001259">
    <property type="component" value="Chromosome"/>
</dbReference>
<dbReference type="GO" id="GO:0005886">
    <property type="term" value="C:plasma membrane"/>
    <property type="evidence" value="ECO:0007669"/>
    <property type="project" value="UniProtKB-SubCell"/>
</dbReference>
<dbReference type="GO" id="GO:0005525">
    <property type="term" value="F:GTP binding"/>
    <property type="evidence" value="ECO:0007669"/>
    <property type="project" value="UniProtKB-UniRule"/>
</dbReference>
<dbReference type="GO" id="GO:0003924">
    <property type="term" value="F:GTPase activity"/>
    <property type="evidence" value="ECO:0007669"/>
    <property type="project" value="UniProtKB-UniRule"/>
</dbReference>
<dbReference type="GO" id="GO:0043022">
    <property type="term" value="F:ribosome binding"/>
    <property type="evidence" value="ECO:0007669"/>
    <property type="project" value="UniProtKB-UniRule"/>
</dbReference>
<dbReference type="GO" id="GO:0003746">
    <property type="term" value="F:translation elongation factor activity"/>
    <property type="evidence" value="ECO:0007669"/>
    <property type="project" value="UniProtKB-UniRule"/>
</dbReference>
<dbReference type="GO" id="GO:0045727">
    <property type="term" value="P:positive regulation of translation"/>
    <property type="evidence" value="ECO:0007669"/>
    <property type="project" value="UniProtKB-UniRule"/>
</dbReference>
<dbReference type="CDD" id="cd03699">
    <property type="entry name" value="EF4_II"/>
    <property type="match status" value="1"/>
</dbReference>
<dbReference type="CDD" id="cd16260">
    <property type="entry name" value="EF4_III"/>
    <property type="match status" value="1"/>
</dbReference>
<dbReference type="CDD" id="cd01890">
    <property type="entry name" value="LepA"/>
    <property type="match status" value="1"/>
</dbReference>
<dbReference type="CDD" id="cd03709">
    <property type="entry name" value="lepA_C"/>
    <property type="match status" value="1"/>
</dbReference>
<dbReference type="FunFam" id="3.40.50.300:FF:000078">
    <property type="entry name" value="Elongation factor 4"/>
    <property type="match status" value="1"/>
</dbReference>
<dbReference type="FunFam" id="2.40.30.10:FF:000015">
    <property type="entry name" value="Translation factor GUF1, mitochondrial"/>
    <property type="match status" value="1"/>
</dbReference>
<dbReference type="FunFam" id="3.30.70.240:FF:000007">
    <property type="entry name" value="Translation factor GUF1, mitochondrial"/>
    <property type="match status" value="1"/>
</dbReference>
<dbReference type="FunFam" id="3.30.70.2570:FF:000001">
    <property type="entry name" value="Translation factor GUF1, mitochondrial"/>
    <property type="match status" value="1"/>
</dbReference>
<dbReference type="FunFam" id="3.30.70.870:FF:000004">
    <property type="entry name" value="Translation factor GUF1, mitochondrial"/>
    <property type="match status" value="1"/>
</dbReference>
<dbReference type="Gene3D" id="3.30.70.240">
    <property type="match status" value="1"/>
</dbReference>
<dbReference type="Gene3D" id="3.30.70.2570">
    <property type="entry name" value="Elongation factor 4, C-terminal domain"/>
    <property type="match status" value="1"/>
</dbReference>
<dbReference type="Gene3D" id="3.30.70.870">
    <property type="entry name" value="Elongation Factor G (Translational Gtpase), domain 3"/>
    <property type="match status" value="1"/>
</dbReference>
<dbReference type="Gene3D" id="3.40.50.300">
    <property type="entry name" value="P-loop containing nucleotide triphosphate hydrolases"/>
    <property type="match status" value="1"/>
</dbReference>
<dbReference type="Gene3D" id="2.40.30.10">
    <property type="entry name" value="Translation factors"/>
    <property type="match status" value="1"/>
</dbReference>
<dbReference type="HAMAP" id="MF_00071">
    <property type="entry name" value="LepA"/>
    <property type="match status" value="1"/>
</dbReference>
<dbReference type="InterPro" id="IPR006297">
    <property type="entry name" value="EF-4"/>
</dbReference>
<dbReference type="InterPro" id="IPR041095">
    <property type="entry name" value="EFG_II"/>
</dbReference>
<dbReference type="InterPro" id="IPR035647">
    <property type="entry name" value="EFG_III/V"/>
</dbReference>
<dbReference type="InterPro" id="IPR000640">
    <property type="entry name" value="EFG_V-like"/>
</dbReference>
<dbReference type="InterPro" id="IPR004161">
    <property type="entry name" value="EFTu-like_2"/>
</dbReference>
<dbReference type="InterPro" id="IPR038363">
    <property type="entry name" value="LepA_C_sf"/>
</dbReference>
<dbReference type="InterPro" id="IPR013842">
    <property type="entry name" value="LepA_CTD"/>
</dbReference>
<dbReference type="InterPro" id="IPR035654">
    <property type="entry name" value="LepA_IV"/>
</dbReference>
<dbReference type="InterPro" id="IPR027417">
    <property type="entry name" value="P-loop_NTPase"/>
</dbReference>
<dbReference type="InterPro" id="IPR005225">
    <property type="entry name" value="Small_GTP-bd"/>
</dbReference>
<dbReference type="InterPro" id="IPR000795">
    <property type="entry name" value="T_Tr_GTP-bd_dom"/>
</dbReference>
<dbReference type="InterPro" id="IPR009000">
    <property type="entry name" value="Transl_B-barrel_sf"/>
</dbReference>
<dbReference type="NCBIfam" id="TIGR01393">
    <property type="entry name" value="lepA"/>
    <property type="match status" value="1"/>
</dbReference>
<dbReference type="NCBIfam" id="TIGR00231">
    <property type="entry name" value="small_GTP"/>
    <property type="match status" value="1"/>
</dbReference>
<dbReference type="PANTHER" id="PTHR43512:SF4">
    <property type="entry name" value="TRANSLATION FACTOR GUF1 HOMOLOG, CHLOROPLASTIC"/>
    <property type="match status" value="1"/>
</dbReference>
<dbReference type="PANTHER" id="PTHR43512">
    <property type="entry name" value="TRANSLATION FACTOR GUF1-RELATED"/>
    <property type="match status" value="1"/>
</dbReference>
<dbReference type="Pfam" id="PF00679">
    <property type="entry name" value="EFG_C"/>
    <property type="match status" value="1"/>
</dbReference>
<dbReference type="Pfam" id="PF14492">
    <property type="entry name" value="EFG_III"/>
    <property type="match status" value="1"/>
</dbReference>
<dbReference type="Pfam" id="PF00009">
    <property type="entry name" value="GTP_EFTU"/>
    <property type="match status" value="1"/>
</dbReference>
<dbReference type="Pfam" id="PF03144">
    <property type="entry name" value="GTP_EFTU_D2"/>
    <property type="match status" value="1"/>
</dbReference>
<dbReference type="Pfam" id="PF06421">
    <property type="entry name" value="LepA_C"/>
    <property type="match status" value="1"/>
</dbReference>
<dbReference type="PRINTS" id="PR00315">
    <property type="entry name" value="ELONGATNFCT"/>
</dbReference>
<dbReference type="SMART" id="SM00838">
    <property type="entry name" value="EFG_C"/>
    <property type="match status" value="1"/>
</dbReference>
<dbReference type="SUPFAM" id="SSF54980">
    <property type="entry name" value="EF-G C-terminal domain-like"/>
    <property type="match status" value="2"/>
</dbReference>
<dbReference type="SUPFAM" id="SSF52540">
    <property type="entry name" value="P-loop containing nucleoside triphosphate hydrolases"/>
    <property type="match status" value="1"/>
</dbReference>
<dbReference type="SUPFAM" id="SSF50447">
    <property type="entry name" value="Translation proteins"/>
    <property type="match status" value="1"/>
</dbReference>
<dbReference type="PROSITE" id="PS51722">
    <property type="entry name" value="G_TR_2"/>
    <property type="match status" value="1"/>
</dbReference>
<accession>Q1G9R4</accession>
<organism>
    <name type="scientific">Lactobacillus delbrueckii subsp. bulgaricus (strain ATCC 11842 / DSM 20081 / BCRC 10696 / JCM 1002 / NBRC 13953 / NCIMB 11778 / NCTC 12712 / WDCM 00102 / Lb 14)</name>
    <dbReference type="NCBI Taxonomy" id="390333"/>
    <lineage>
        <taxon>Bacteria</taxon>
        <taxon>Bacillati</taxon>
        <taxon>Bacillota</taxon>
        <taxon>Bacilli</taxon>
        <taxon>Lactobacillales</taxon>
        <taxon>Lactobacillaceae</taxon>
        <taxon>Lactobacillus</taxon>
    </lineage>
</organism>
<name>LEPA_LACDA</name>